<protein>
    <recommendedName>
        <fullName>Transcriptional regulator MraZ</fullName>
    </recommendedName>
</protein>
<keyword id="KW-0963">Cytoplasm</keyword>
<keyword id="KW-0238">DNA-binding</keyword>
<keyword id="KW-0677">Repeat</keyword>
<keyword id="KW-0804">Transcription</keyword>
<keyword id="KW-0805">Transcription regulation</keyword>
<sequence length="143" mass="17238">MFMGEYDHQLDTKGRMIIPSKFRYDLNERFIITRGLDKCLFGYTLDEWQQIEEKMKTLPMTKKDARKFMRMFFSGAVEVELDKQGRINIPQNLRKYANLTKECTVIGVSNRIEIWDRETWNDFYEESEESFEDIAEDLIDFDF</sequence>
<dbReference type="EMBL" id="BX571857">
    <property type="protein sequence ID" value="CAG42889.1"/>
    <property type="molecule type" value="Genomic_DNA"/>
</dbReference>
<dbReference type="RefSeq" id="WP_000480800.1">
    <property type="nucleotide sequence ID" value="NC_002953.3"/>
</dbReference>
<dbReference type="SMR" id="Q6GA34"/>
<dbReference type="GeneID" id="66839371"/>
<dbReference type="KEGG" id="sas:SAS1112"/>
<dbReference type="HOGENOM" id="CLU_107907_0_5_9"/>
<dbReference type="GO" id="GO:0005737">
    <property type="term" value="C:cytoplasm"/>
    <property type="evidence" value="ECO:0007669"/>
    <property type="project" value="UniProtKB-UniRule"/>
</dbReference>
<dbReference type="GO" id="GO:0009295">
    <property type="term" value="C:nucleoid"/>
    <property type="evidence" value="ECO:0007669"/>
    <property type="project" value="UniProtKB-SubCell"/>
</dbReference>
<dbReference type="GO" id="GO:0003700">
    <property type="term" value="F:DNA-binding transcription factor activity"/>
    <property type="evidence" value="ECO:0007669"/>
    <property type="project" value="UniProtKB-UniRule"/>
</dbReference>
<dbReference type="GO" id="GO:0000976">
    <property type="term" value="F:transcription cis-regulatory region binding"/>
    <property type="evidence" value="ECO:0007669"/>
    <property type="project" value="TreeGrafter"/>
</dbReference>
<dbReference type="GO" id="GO:2000143">
    <property type="term" value="P:negative regulation of DNA-templated transcription initiation"/>
    <property type="evidence" value="ECO:0007669"/>
    <property type="project" value="TreeGrafter"/>
</dbReference>
<dbReference type="CDD" id="cd16321">
    <property type="entry name" value="MraZ_C"/>
    <property type="match status" value="1"/>
</dbReference>
<dbReference type="CDD" id="cd16320">
    <property type="entry name" value="MraZ_N"/>
    <property type="match status" value="1"/>
</dbReference>
<dbReference type="FunFam" id="3.40.1550.20:FF:000002">
    <property type="entry name" value="Transcriptional regulator MraZ"/>
    <property type="match status" value="1"/>
</dbReference>
<dbReference type="Gene3D" id="3.40.1550.20">
    <property type="entry name" value="Transcriptional regulator MraZ domain"/>
    <property type="match status" value="1"/>
</dbReference>
<dbReference type="HAMAP" id="MF_01008">
    <property type="entry name" value="MraZ"/>
    <property type="match status" value="1"/>
</dbReference>
<dbReference type="InterPro" id="IPR003444">
    <property type="entry name" value="MraZ"/>
</dbReference>
<dbReference type="InterPro" id="IPR035644">
    <property type="entry name" value="MraZ_C"/>
</dbReference>
<dbReference type="InterPro" id="IPR020603">
    <property type="entry name" value="MraZ_dom"/>
</dbReference>
<dbReference type="InterPro" id="IPR035642">
    <property type="entry name" value="MraZ_N"/>
</dbReference>
<dbReference type="InterPro" id="IPR038619">
    <property type="entry name" value="MraZ_sf"/>
</dbReference>
<dbReference type="InterPro" id="IPR007159">
    <property type="entry name" value="SpoVT-AbrB_dom"/>
</dbReference>
<dbReference type="InterPro" id="IPR037914">
    <property type="entry name" value="SpoVT-AbrB_sf"/>
</dbReference>
<dbReference type="NCBIfam" id="TIGR00242">
    <property type="entry name" value="division/cell wall cluster transcriptional repressor MraZ"/>
    <property type="match status" value="1"/>
</dbReference>
<dbReference type="PANTHER" id="PTHR34701">
    <property type="entry name" value="TRANSCRIPTIONAL REGULATOR MRAZ"/>
    <property type="match status" value="1"/>
</dbReference>
<dbReference type="PANTHER" id="PTHR34701:SF1">
    <property type="entry name" value="TRANSCRIPTIONAL REGULATOR MRAZ"/>
    <property type="match status" value="1"/>
</dbReference>
<dbReference type="Pfam" id="PF02381">
    <property type="entry name" value="MraZ"/>
    <property type="match status" value="2"/>
</dbReference>
<dbReference type="SUPFAM" id="SSF89447">
    <property type="entry name" value="AbrB/MazE/MraZ-like"/>
    <property type="match status" value="1"/>
</dbReference>
<dbReference type="PROSITE" id="PS51740">
    <property type="entry name" value="SPOVT_ABRB"/>
    <property type="match status" value="2"/>
</dbReference>
<evidence type="ECO:0000255" key="1">
    <source>
        <dbReference type="HAMAP-Rule" id="MF_01008"/>
    </source>
</evidence>
<evidence type="ECO:0000255" key="2">
    <source>
        <dbReference type="PROSITE-ProRule" id="PRU01076"/>
    </source>
</evidence>
<reference key="1">
    <citation type="journal article" date="2004" name="Proc. Natl. Acad. Sci. U.S.A.">
        <title>Complete genomes of two clinical Staphylococcus aureus strains: evidence for the rapid evolution of virulence and drug resistance.</title>
        <authorList>
            <person name="Holden M.T.G."/>
            <person name="Feil E.J."/>
            <person name="Lindsay J.A."/>
            <person name="Peacock S.J."/>
            <person name="Day N.P.J."/>
            <person name="Enright M.C."/>
            <person name="Foster T.J."/>
            <person name="Moore C.E."/>
            <person name="Hurst L."/>
            <person name="Atkin R."/>
            <person name="Barron A."/>
            <person name="Bason N."/>
            <person name="Bentley S.D."/>
            <person name="Chillingworth C."/>
            <person name="Chillingworth T."/>
            <person name="Churcher C."/>
            <person name="Clark L."/>
            <person name="Corton C."/>
            <person name="Cronin A."/>
            <person name="Doggett J."/>
            <person name="Dowd L."/>
            <person name="Feltwell T."/>
            <person name="Hance Z."/>
            <person name="Harris B."/>
            <person name="Hauser H."/>
            <person name="Holroyd S."/>
            <person name="Jagels K."/>
            <person name="James K.D."/>
            <person name="Lennard N."/>
            <person name="Line A."/>
            <person name="Mayes R."/>
            <person name="Moule S."/>
            <person name="Mungall K."/>
            <person name="Ormond D."/>
            <person name="Quail M.A."/>
            <person name="Rabbinowitsch E."/>
            <person name="Rutherford K.M."/>
            <person name="Sanders M."/>
            <person name="Sharp S."/>
            <person name="Simmonds M."/>
            <person name="Stevens K."/>
            <person name="Whitehead S."/>
            <person name="Barrell B.G."/>
            <person name="Spratt B.G."/>
            <person name="Parkhill J."/>
        </authorList>
    </citation>
    <scope>NUCLEOTIDE SEQUENCE [LARGE SCALE GENOMIC DNA]</scope>
    <source>
        <strain>MSSA476</strain>
    </source>
</reference>
<comment type="subunit">
    <text evidence="1">Forms oligomers.</text>
</comment>
<comment type="subcellular location">
    <subcellularLocation>
        <location evidence="1">Cytoplasm</location>
        <location evidence="1">Nucleoid</location>
    </subcellularLocation>
</comment>
<comment type="similarity">
    <text evidence="1">Belongs to the MraZ family.</text>
</comment>
<name>MRAZ_STAAS</name>
<proteinExistence type="inferred from homology"/>
<gene>
    <name evidence="1" type="primary">mraZ</name>
    <name type="ordered locus">SAS1112</name>
</gene>
<organism>
    <name type="scientific">Staphylococcus aureus (strain MSSA476)</name>
    <dbReference type="NCBI Taxonomy" id="282459"/>
    <lineage>
        <taxon>Bacteria</taxon>
        <taxon>Bacillati</taxon>
        <taxon>Bacillota</taxon>
        <taxon>Bacilli</taxon>
        <taxon>Bacillales</taxon>
        <taxon>Staphylococcaceae</taxon>
        <taxon>Staphylococcus</taxon>
    </lineage>
</organism>
<feature type="chain" id="PRO_0000108542" description="Transcriptional regulator MraZ">
    <location>
        <begin position="1"/>
        <end position="143"/>
    </location>
</feature>
<feature type="domain" description="SpoVT-AbrB 1" evidence="2">
    <location>
        <begin position="5"/>
        <end position="47"/>
    </location>
</feature>
<feature type="domain" description="SpoVT-AbrB 2" evidence="2">
    <location>
        <begin position="76"/>
        <end position="119"/>
    </location>
</feature>
<accession>Q6GA34</accession>